<proteinExistence type="evidence at transcript level"/>
<organism>
    <name type="scientific">Canis lupus familiaris</name>
    <name type="common">Dog</name>
    <name type="synonym">Canis familiaris</name>
    <dbReference type="NCBI Taxonomy" id="9615"/>
    <lineage>
        <taxon>Eukaryota</taxon>
        <taxon>Metazoa</taxon>
        <taxon>Chordata</taxon>
        <taxon>Craniata</taxon>
        <taxon>Vertebrata</taxon>
        <taxon>Euteleostomi</taxon>
        <taxon>Mammalia</taxon>
        <taxon>Eutheria</taxon>
        <taxon>Laurasiatheria</taxon>
        <taxon>Carnivora</taxon>
        <taxon>Caniformia</taxon>
        <taxon>Canidae</taxon>
        <taxon>Canis</taxon>
    </lineage>
</organism>
<accession>Q28262</accession>
<dbReference type="EC" id="3.1.1.47" evidence="2"/>
<dbReference type="EMBL" id="U34246">
    <property type="protein sequence ID" value="AAC48484.1"/>
    <property type="molecule type" value="mRNA"/>
</dbReference>
<dbReference type="RefSeq" id="NP_001003198.1">
    <property type="nucleotide sequence ID" value="NM_001003198.1"/>
</dbReference>
<dbReference type="SMR" id="Q28262"/>
<dbReference type="STRING" id="9615.ENSCAFP00000058629"/>
<dbReference type="ESTHER" id="canfa-pafa">
    <property type="family name" value="PAF-Acetylhydrolase"/>
</dbReference>
<dbReference type="GlyCosmos" id="Q28262">
    <property type="glycosylation" value="3 sites, No reported glycans"/>
</dbReference>
<dbReference type="PaxDb" id="9612-ENSCAFP00000030617"/>
<dbReference type="Ensembl" id="ENSCAFT00030011773.1">
    <property type="protein sequence ID" value="ENSCAFP00030010312.1"/>
    <property type="gene ID" value="ENSCAFG00030006390.1"/>
</dbReference>
<dbReference type="GeneID" id="403848"/>
<dbReference type="KEGG" id="cfa:403848"/>
<dbReference type="CTD" id="7941"/>
<dbReference type="eggNOG" id="KOG3847">
    <property type="taxonomic scope" value="Eukaryota"/>
</dbReference>
<dbReference type="InParanoid" id="Q28262"/>
<dbReference type="OrthoDB" id="2363873at2759"/>
<dbReference type="Proteomes" id="UP000002254">
    <property type="component" value="Unplaced"/>
</dbReference>
<dbReference type="Proteomes" id="UP000694429">
    <property type="component" value="Chromosome 12"/>
</dbReference>
<dbReference type="Proteomes" id="UP000694542">
    <property type="component" value="Unplaced"/>
</dbReference>
<dbReference type="Proteomes" id="UP000805418">
    <property type="component" value="Unplaced"/>
</dbReference>
<dbReference type="GO" id="GO:0034364">
    <property type="term" value="C:high-density lipoprotein particle"/>
    <property type="evidence" value="ECO:0000250"/>
    <property type="project" value="UniProtKB"/>
</dbReference>
<dbReference type="GO" id="GO:0034362">
    <property type="term" value="C:low-density lipoprotein particle"/>
    <property type="evidence" value="ECO:0000250"/>
    <property type="project" value="UniProtKB"/>
</dbReference>
<dbReference type="GO" id="GO:0003847">
    <property type="term" value="F:1-alkyl-2-acetylglycerophosphocholine esterase activity"/>
    <property type="evidence" value="ECO:0000250"/>
    <property type="project" value="UniProtKB"/>
</dbReference>
<dbReference type="GO" id="GO:0047499">
    <property type="term" value="F:calcium-independent phospholipase A2 activity"/>
    <property type="evidence" value="ECO:0000250"/>
    <property type="project" value="UniProtKB"/>
</dbReference>
<dbReference type="GO" id="GO:0034638">
    <property type="term" value="P:phosphatidylcholine catabolic process"/>
    <property type="evidence" value="ECO:0000250"/>
    <property type="project" value="UniProtKB"/>
</dbReference>
<dbReference type="GO" id="GO:0062234">
    <property type="term" value="P:platelet activating factor catabolic process"/>
    <property type="evidence" value="ECO:0000250"/>
    <property type="project" value="UniProtKB"/>
</dbReference>
<dbReference type="GO" id="GO:0046469">
    <property type="term" value="P:platelet activating factor metabolic process"/>
    <property type="evidence" value="ECO:0000250"/>
    <property type="project" value="UniProtKB"/>
</dbReference>
<dbReference type="FunFam" id="3.40.50.1820:FF:000062">
    <property type="entry name" value="Platelet-activating factor acetylhydrolase"/>
    <property type="match status" value="1"/>
</dbReference>
<dbReference type="Gene3D" id="3.40.50.1820">
    <property type="entry name" value="alpha/beta hydrolase"/>
    <property type="match status" value="1"/>
</dbReference>
<dbReference type="InterPro" id="IPR029058">
    <property type="entry name" value="AB_hydrolase_fold"/>
</dbReference>
<dbReference type="InterPro" id="IPR016715">
    <property type="entry name" value="PAF_acetylhydro_eukaryote"/>
</dbReference>
<dbReference type="PANTHER" id="PTHR10272">
    <property type="entry name" value="PLATELET-ACTIVATING FACTOR ACETYLHYDROLASE"/>
    <property type="match status" value="1"/>
</dbReference>
<dbReference type="PANTHER" id="PTHR10272:SF12">
    <property type="entry name" value="PLATELET-ACTIVATING FACTOR ACETYLHYDROLASE"/>
    <property type="match status" value="1"/>
</dbReference>
<dbReference type="Pfam" id="PF03403">
    <property type="entry name" value="PAF-AH_p_II"/>
    <property type="match status" value="1"/>
</dbReference>
<dbReference type="PIRSF" id="PIRSF018169">
    <property type="entry name" value="PAF_acetylhydrolase"/>
    <property type="match status" value="1"/>
</dbReference>
<dbReference type="SUPFAM" id="SSF53474">
    <property type="entry name" value="alpha/beta-Hydrolases"/>
    <property type="match status" value="1"/>
</dbReference>
<dbReference type="PROSITE" id="PS00120">
    <property type="entry name" value="LIPASE_SER"/>
    <property type="match status" value="1"/>
</dbReference>
<gene>
    <name type="primary">PLA2G7</name>
</gene>
<protein>
    <recommendedName>
        <fullName>Platelet-activating factor acetylhydrolase</fullName>
        <shortName>PAF acetylhydrolase</shortName>
        <ecNumber evidence="2">3.1.1.47</ecNumber>
    </recommendedName>
    <alternativeName>
        <fullName>1-alkyl-2-acetylglycerophosphocholine esterase</fullName>
    </alternativeName>
    <alternativeName>
        <fullName>2-acetyl-1-alkylglycerophosphocholine esterase</fullName>
    </alternativeName>
    <alternativeName>
        <fullName>LDL-associated phospholipase A2</fullName>
        <shortName>LDL-PLA(2)</shortName>
    </alternativeName>
    <alternativeName>
        <fullName>PAF 2-acylhydrolase</fullName>
    </alternativeName>
</protein>
<reference key="1">
    <citation type="journal article" date="1995" name="J. Biol. Chem.">
        <title>Plasma platelet-activating factor acetylhydrolase is a secreted phospholipase A2 with a catalytic triad.</title>
        <authorList>
            <person name="Tjoelker L.W."/>
            <person name="Eberhardt C."/>
            <person name="Unger J."/>
            <person name="le Trong H."/>
            <person name="Zimmerman G.A."/>
            <person name="McIntyre T.M."/>
            <person name="Stafforini D.M."/>
            <person name="Prescott S.M."/>
            <person name="Gray P.W."/>
        </authorList>
    </citation>
    <scope>NUCLEOTIDE SEQUENCE [MRNA]</scope>
    <source>
        <tissue>Spleen</tissue>
    </source>
</reference>
<evidence type="ECO:0000250" key="1"/>
<evidence type="ECO:0000250" key="2">
    <source>
        <dbReference type="UniProtKB" id="Q13093"/>
    </source>
</evidence>
<evidence type="ECO:0000255" key="3"/>
<evidence type="ECO:0000255" key="4">
    <source>
        <dbReference type="PROSITE-ProRule" id="PRU10037"/>
    </source>
</evidence>
<evidence type="ECO:0000305" key="5"/>
<keyword id="KW-0325">Glycoprotein</keyword>
<keyword id="KW-0345">HDL</keyword>
<keyword id="KW-0378">Hydrolase</keyword>
<keyword id="KW-0427">LDL</keyword>
<keyword id="KW-0442">Lipid degradation</keyword>
<keyword id="KW-0443">Lipid metabolism</keyword>
<keyword id="KW-0595">Phospholipid degradation</keyword>
<keyword id="KW-1208">Phospholipid metabolism</keyword>
<keyword id="KW-1185">Reference proteome</keyword>
<keyword id="KW-0964">Secreted</keyword>
<keyword id="KW-0732">Signal</keyword>
<feature type="signal peptide" evidence="1">
    <location>
        <begin position="1"/>
        <end position="21"/>
    </location>
</feature>
<feature type="chain" id="PRO_0000017831" description="Platelet-activating factor acetylhydrolase">
    <location>
        <begin position="22"/>
        <end position="444"/>
    </location>
</feature>
<feature type="active site" description="Nucleophile" evidence="1">
    <location>
        <position position="274"/>
    </location>
</feature>
<feature type="active site" description="Charge relay system" evidence="4">
    <location>
        <position position="297"/>
    </location>
</feature>
<feature type="active site" description="Charge relay system" evidence="4">
    <location>
        <position position="352"/>
    </location>
</feature>
<feature type="glycosylation site" description="N-linked (GlcNAc...) asparagine" evidence="3">
    <location>
        <position position="60"/>
    </location>
</feature>
<feature type="glycosylation site" description="N-linked (GlcNAc...) asparagine" evidence="3">
    <location>
        <position position="200"/>
    </location>
</feature>
<feature type="glycosylation site" description="N-linked (GlcNAc...) asparagine" evidence="3">
    <location>
        <position position="424"/>
    </location>
</feature>
<name>PAFA_CANLF</name>
<sequence length="444" mass="50136">MLPPKLHALFCLCSCLTLVHPIDWQDLNPVAHIRSSAWANKIQALMAAASIRQSRIPKGNGSYSVGCTDLMFDYTNKGTFLRLYYPSQEDDHSDTLWIPNKEYFFGLSKYLGTPWLMGKILSFFFGSVTTPANWNSPLRTGEKYPLIVFSHGLGAFRTIYSAIGIDLASHGFIVAAIEHRDGSASATYYFKDQSAAEIGNKSWSYLQELKPGDEEIHVRNEQVQKRAKECSQALNLILDIDHGRPIKNVLDLEFDVEQLKDSIDRDKIAVIGHSFGGATVLQALSEDQRFRCGIALDAWMLPLDDAIYSRIPQPLFFINSERFQFPENIKKMKKCYSPDKERKMITIRGSVHQNFADFTFTTGKIVGYIFTLKGDIDSNVAIDLCNKASLAFLQKHLGLRKDFDQWDSLIEGKDENLMPGTNINITNEHDTLQNSPEAEKSNLD</sequence>
<comment type="function">
    <text evidence="2">Lipoprotein-associated calcium-independent phospholipase A2 involved in phospholipid catabolism during inflammatory and oxidative stress response (By similarity). At the lipid-aqueous interface, hydrolyzes the ester bond of fatty acyl group attached at sn-2 position of phospholipids (phospholipase A2 activity) (By similarity). Specifically targets phospholipids with a short-chain fatty acyl group at sn-2 position. Can hydrolyze phospholipids with long fatty acyl chains, only if they carry oxidized functional groups (By similarity). Hydrolyzes and inactivates platelet-activating factor (PAF, 1-O-alkyl-2-acetyl-sn-glycero-3-phosphocholine), a potent pro-inflammatory signaling lipid that acts through PTAFR on various innate immune cells (By similarity). Hydrolyzes oxidatively truncated phospholipids carrying an aldehyde group at omega position, preventing their accumulation in low-density lipoprotein (LDL) particles and uncontrolled pro-inflammatory effects (By similarity). As part of high-density lipoprotein (HDL) particles, can hydrolyze phospholipids having long-chain fatty acyl hydroperoxides at sn-2 position and protect against potential accumulation of these oxylipins in the vascular wall (By similarity). Catalyzes the release from membrane phospholipids of F2-isoprostanes, lipid biomarkers of cellular oxidative damage (By similarity).</text>
</comment>
<comment type="catalytic activity">
    <reaction evidence="2">
        <text>a 1-O-alkyl-2-acetyl-sn-glycero-3-phosphocholine + H2O = a 1-O-alkyl-sn-glycero-3-phosphocholine + acetate + H(+)</text>
        <dbReference type="Rhea" id="RHEA:17777"/>
        <dbReference type="ChEBI" id="CHEBI:15377"/>
        <dbReference type="ChEBI" id="CHEBI:15378"/>
        <dbReference type="ChEBI" id="CHEBI:30089"/>
        <dbReference type="ChEBI" id="CHEBI:30909"/>
        <dbReference type="ChEBI" id="CHEBI:36707"/>
        <dbReference type="EC" id="3.1.1.47"/>
    </reaction>
    <physiologicalReaction direction="left-to-right" evidence="2">
        <dbReference type="Rhea" id="RHEA:17778"/>
    </physiologicalReaction>
</comment>
<comment type="catalytic activity">
    <reaction evidence="2">
        <text>1-O-decyl-2-acetyl-sn-glycero-3-phosphocholine + H2O = 1-O-decyl-sn-glycero-3-phosphocholine + acetate + H(+)</text>
        <dbReference type="Rhea" id="RHEA:41376"/>
        <dbReference type="ChEBI" id="CHEBI:15377"/>
        <dbReference type="ChEBI" id="CHEBI:15378"/>
        <dbReference type="ChEBI" id="CHEBI:30089"/>
        <dbReference type="ChEBI" id="CHEBI:78108"/>
        <dbReference type="ChEBI" id="CHEBI:78109"/>
    </reaction>
    <physiologicalReaction direction="left-to-right" evidence="2">
        <dbReference type="Rhea" id="RHEA:41377"/>
    </physiologicalReaction>
</comment>
<comment type="catalytic activity">
    <reaction evidence="2">
        <text>1-O-dodecyl-2-acetyl-sn-glycero-3-phosphocholine + H2O = 1-O-dodecyl-sn-glycero-3-phosphocholine + acetate + H(+)</text>
        <dbReference type="Rhea" id="RHEA:41372"/>
        <dbReference type="ChEBI" id="CHEBI:15377"/>
        <dbReference type="ChEBI" id="CHEBI:15378"/>
        <dbReference type="ChEBI" id="CHEBI:30089"/>
        <dbReference type="ChEBI" id="CHEBI:78103"/>
        <dbReference type="ChEBI" id="CHEBI:78104"/>
    </reaction>
    <physiologicalReaction direction="left-to-right" evidence="2">
        <dbReference type="Rhea" id="RHEA:41373"/>
    </physiologicalReaction>
</comment>
<comment type="catalytic activity">
    <reaction evidence="2">
        <text>1-O-tetradecyl-2-acetyl-sn-glycero-3-phosphocholine + H2O = 1-O-tetradecyl-sn-glycero-3-phosphocholine + acetate + H(+)</text>
        <dbReference type="Rhea" id="RHEA:41368"/>
        <dbReference type="ChEBI" id="CHEBI:15377"/>
        <dbReference type="ChEBI" id="CHEBI:15378"/>
        <dbReference type="ChEBI" id="CHEBI:30089"/>
        <dbReference type="ChEBI" id="CHEBI:78101"/>
        <dbReference type="ChEBI" id="CHEBI:78102"/>
    </reaction>
    <physiologicalReaction direction="left-to-right" evidence="2">
        <dbReference type="Rhea" id="RHEA:41369"/>
    </physiologicalReaction>
</comment>
<comment type="catalytic activity">
    <reaction evidence="2">
        <text>1-O-hexadecyl-2-acetyl-sn-glycero-3-phosphocholine + H2O = 1-O-hexadecyl-sn-glycero-3-phosphocholine + acetate + H(+)</text>
        <dbReference type="Rhea" id="RHEA:40479"/>
        <dbReference type="ChEBI" id="CHEBI:15377"/>
        <dbReference type="ChEBI" id="CHEBI:15378"/>
        <dbReference type="ChEBI" id="CHEBI:30089"/>
        <dbReference type="ChEBI" id="CHEBI:44811"/>
        <dbReference type="ChEBI" id="CHEBI:64496"/>
    </reaction>
    <physiologicalReaction direction="left-to-right" evidence="2">
        <dbReference type="Rhea" id="RHEA:40480"/>
    </physiologicalReaction>
</comment>
<comment type="catalytic activity">
    <reaction evidence="2">
        <text>1-O-octadecyl-2-acetyl-sn-glycero-3-phosphocholine + H2O = 1-O-octadecyl-sn-glycero-3-phosphocholine + acetate + H(+)</text>
        <dbReference type="Rhea" id="RHEA:41183"/>
        <dbReference type="ChEBI" id="CHEBI:15377"/>
        <dbReference type="ChEBI" id="CHEBI:15378"/>
        <dbReference type="ChEBI" id="CHEBI:30089"/>
        <dbReference type="ChEBI" id="CHEBI:52450"/>
        <dbReference type="ChEBI" id="CHEBI:75216"/>
    </reaction>
    <physiologicalReaction direction="left-to-right" evidence="2">
        <dbReference type="Rhea" id="RHEA:41184"/>
    </physiologicalReaction>
</comment>
<comment type="catalytic activity">
    <reaction evidence="2">
        <text>1-hexadecanoyl-2-acetyl-sn-glycero-3-phosphocholine + H2O = 1-hexadecanoyl-sn-glycero-3-phosphocholine + acetate + H(+)</text>
        <dbReference type="Rhea" id="RHEA:41203"/>
        <dbReference type="ChEBI" id="CHEBI:15377"/>
        <dbReference type="ChEBI" id="CHEBI:15378"/>
        <dbReference type="ChEBI" id="CHEBI:30089"/>
        <dbReference type="ChEBI" id="CHEBI:72998"/>
        <dbReference type="ChEBI" id="CHEBI:75219"/>
    </reaction>
    <physiologicalReaction direction="left-to-right" evidence="2">
        <dbReference type="Rhea" id="RHEA:41204"/>
    </physiologicalReaction>
</comment>
<comment type="catalytic activity">
    <reaction evidence="2">
        <text>1-hexadecanoyl-2-propionyl-sn-glycero-3-phosphocholine + H2O = propanoate + 1-hexadecanoyl-sn-glycero-3-phosphocholine + H(+)</text>
        <dbReference type="Rhea" id="RHEA:41191"/>
        <dbReference type="ChEBI" id="CHEBI:15377"/>
        <dbReference type="ChEBI" id="CHEBI:15378"/>
        <dbReference type="ChEBI" id="CHEBI:17272"/>
        <dbReference type="ChEBI" id="CHEBI:72998"/>
        <dbReference type="ChEBI" id="CHEBI:77831"/>
    </reaction>
    <physiologicalReaction direction="left-to-right" evidence="2">
        <dbReference type="Rhea" id="RHEA:41192"/>
    </physiologicalReaction>
</comment>
<comment type="catalytic activity">
    <reaction evidence="2">
        <text>1-hexadecanoyl-2-butanoyl-sn-glycero-3-phosphocholine + H2O = butanoate + 1-hexadecanoyl-sn-glycero-3-phosphocholine + H(+)</text>
        <dbReference type="Rhea" id="RHEA:41195"/>
        <dbReference type="ChEBI" id="CHEBI:15377"/>
        <dbReference type="ChEBI" id="CHEBI:15378"/>
        <dbReference type="ChEBI" id="CHEBI:17968"/>
        <dbReference type="ChEBI" id="CHEBI:72998"/>
        <dbReference type="ChEBI" id="CHEBI:77832"/>
    </reaction>
    <physiologicalReaction direction="left-to-right" evidence="2">
        <dbReference type="Rhea" id="RHEA:41196"/>
    </physiologicalReaction>
</comment>
<comment type="catalytic activity">
    <reaction evidence="2">
        <text>1-hexadecanoyl-2-pentanoyl-sn-glycero-3-phosphocholine + H2O = pentanoate + 1-hexadecanoyl-sn-glycero-3-phosphocholine + H(+)</text>
        <dbReference type="Rhea" id="RHEA:41199"/>
        <dbReference type="ChEBI" id="CHEBI:15377"/>
        <dbReference type="ChEBI" id="CHEBI:15378"/>
        <dbReference type="ChEBI" id="CHEBI:31011"/>
        <dbReference type="ChEBI" id="CHEBI:72998"/>
        <dbReference type="ChEBI" id="CHEBI:77833"/>
    </reaction>
    <physiologicalReaction direction="left-to-right" evidence="2">
        <dbReference type="Rhea" id="RHEA:41200"/>
    </physiologicalReaction>
</comment>
<comment type="catalytic activity">
    <reaction evidence="2">
        <text>1-hexadecanoyl-2-glutaroyl-sn-glycero-3-phosphocholine + H2O = glutarate + 1-hexadecanoyl-sn-glycero-3-phosphocholine + H(+)</text>
        <dbReference type="Rhea" id="RHEA:41159"/>
        <dbReference type="ChEBI" id="CHEBI:15377"/>
        <dbReference type="ChEBI" id="CHEBI:15378"/>
        <dbReference type="ChEBI" id="CHEBI:30921"/>
        <dbReference type="ChEBI" id="CHEBI:72998"/>
        <dbReference type="ChEBI" id="CHEBI:77756"/>
    </reaction>
    <physiologicalReaction direction="left-to-right" evidence="2">
        <dbReference type="Rhea" id="RHEA:41160"/>
    </physiologicalReaction>
</comment>
<comment type="catalytic activity">
    <reaction evidence="2">
        <text>1-hexadecanoyl-2-(5-oxopentanoyl)-sn-glycero-3-phosphocholine + H2O = 5-oxopentanoate + 1-hexadecanoyl-sn-glycero-3-phosphocholine + H(+)</text>
        <dbReference type="Rhea" id="RHEA:40483"/>
        <dbReference type="ChEBI" id="CHEBI:15377"/>
        <dbReference type="ChEBI" id="CHEBI:15378"/>
        <dbReference type="ChEBI" id="CHEBI:16120"/>
        <dbReference type="ChEBI" id="CHEBI:72998"/>
        <dbReference type="ChEBI" id="CHEBI:77890"/>
    </reaction>
    <physiologicalReaction direction="left-to-right" evidence="2">
        <dbReference type="Rhea" id="RHEA:40484"/>
    </physiologicalReaction>
</comment>
<comment type="catalytic activity">
    <reaction evidence="2">
        <text>1-hexadecanoyl-2-(9-oxononanoyl)-sn-glycero-3-phosphocholine + H2O = 9-oxononanoate + 1-hexadecanoyl-sn-glycero-3-phosphocholine + H(+)</text>
        <dbReference type="Rhea" id="RHEA:41179"/>
        <dbReference type="ChEBI" id="CHEBI:15377"/>
        <dbReference type="ChEBI" id="CHEBI:15378"/>
        <dbReference type="ChEBI" id="CHEBI:61042"/>
        <dbReference type="ChEBI" id="CHEBI:72998"/>
        <dbReference type="ChEBI" id="CHEBI:77812"/>
    </reaction>
    <physiologicalReaction direction="left-to-right" evidence="2">
        <dbReference type="Rhea" id="RHEA:41180"/>
    </physiologicalReaction>
</comment>
<comment type="catalytic activity">
    <reaction evidence="2">
        <text>1-hexadecanoyl-2-[9-hydroperoxy-(10E-octadecenoyl)]-sn-glycero-3-phosphocholine + H2O = 9-hydroperoxy-10E-octadecenoate + 1-hexadecanoyl-sn-glycero-3-phosphocholine + H(+)</text>
        <dbReference type="Rhea" id="RHEA:41151"/>
        <dbReference type="ChEBI" id="CHEBI:15377"/>
        <dbReference type="ChEBI" id="CHEBI:15378"/>
        <dbReference type="ChEBI" id="CHEBI:72998"/>
        <dbReference type="ChEBI" id="CHEBI:77753"/>
        <dbReference type="ChEBI" id="CHEBI:77754"/>
    </reaction>
    <physiologicalReaction direction="left-to-right" evidence="2">
        <dbReference type="Rhea" id="RHEA:41152"/>
    </physiologicalReaction>
</comment>
<comment type="catalytic activity">
    <reaction evidence="2">
        <text>1-hexadecanoyl-2-(10-hydroperoxy-8E-octadecenoyl)-sn-glycero-3-phosphocholine + H2O = 10-hydroperoxy-(8E)-octadecenoate + 1-hexadecanoyl-sn-glycero-3-phosphocholine + H(+)</text>
        <dbReference type="Rhea" id="RHEA:41155"/>
        <dbReference type="ChEBI" id="CHEBI:15377"/>
        <dbReference type="ChEBI" id="CHEBI:15378"/>
        <dbReference type="ChEBI" id="CHEBI:72998"/>
        <dbReference type="ChEBI" id="CHEBI:77749"/>
        <dbReference type="ChEBI" id="CHEBI:77755"/>
    </reaction>
    <physiologicalReaction direction="left-to-right" evidence="2">
        <dbReference type="Rhea" id="RHEA:41156"/>
    </physiologicalReaction>
</comment>
<comment type="subcellular location">
    <subcellularLocation>
        <location evidence="2">Secreted</location>
        <location evidence="2">Extracellular space</location>
    </subcellularLocation>
    <text evidence="2">Associates with both LDL and HDL particles in plasma. Mainly associates with pro-inflammatory electronegative LDL particles.</text>
</comment>
<comment type="tissue specificity">
    <text evidence="2">Plasma.</text>
</comment>
<comment type="PTM">
    <text evidence="2">N-glycosylated.</text>
</comment>
<comment type="similarity">
    <text evidence="5">Belongs to the AB hydrolase superfamily. Lipase family.</text>
</comment>